<dbReference type="EMBL" id="AF136943">
    <property type="protein sequence ID" value="AAD24587.1"/>
    <property type="molecule type" value="mRNA"/>
</dbReference>
<dbReference type="RefSeq" id="NP_114010.1">
    <property type="nucleotide sequence ID" value="NM_031822.1"/>
</dbReference>
<dbReference type="PDB" id="1XLS">
    <property type="method" value="X-ray"/>
    <property type="resolution" value="2.96 A"/>
    <property type="chains" value="I/J/K/L/M/N/O/P=740-756"/>
</dbReference>
<dbReference type="PDB" id="3HLV">
    <property type="method" value="X-ray"/>
    <property type="resolution" value="3.00 A"/>
    <property type="chains" value="C/D=686-698"/>
</dbReference>
<dbReference type="PDB" id="3HM1">
    <property type="method" value="X-ray"/>
    <property type="resolution" value="2.33 A"/>
    <property type="chains" value="C/D=686-698"/>
</dbReference>
<dbReference type="PDB" id="3L03">
    <property type="method" value="X-ray"/>
    <property type="resolution" value="1.90 A"/>
    <property type="chains" value="C/D=686-698"/>
</dbReference>
<dbReference type="PDBsum" id="1XLS"/>
<dbReference type="PDBsum" id="3HLV"/>
<dbReference type="PDBsum" id="3HM1"/>
<dbReference type="PDBsum" id="3L03"/>
<dbReference type="SMR" id="Q9WUI9"/>
<dbReference type="FunCoup" id="Q9WUI9">
    <property type="interactions" value="2973"/>
</dbReference>
<dbReference type="STRING" id="10116.ENSRNOP00000011026"/>
<dbReference type="GlyGen" id="Q9WUI9">
    <property type="glycosylation" value="1 site"/>
</dbReference>
<dbReference type="iPTMnet" id="Q9WUI9"/>
<dbReference type="PhosphoSitePlus" id="Q9WUI9"/>
<dbReference type="PaxDb" id="10116-ENSRNOP00000011026"/>
<dbReference type="GeneID" id="83724"/>
<dbReference type="KEGG" id="rno:83724"/>
<dbReference type="UCSC" id="RGD:620108">
    <property type="organism name" value="rat"/>
</dbReference>
<dbReference type="AGR" id="RGD:620108"/>
<dbReference type="CTD" id="10499"/>
<dbReference type="RGD" id="620108">
    <property type="gene designation" value="Ncoa2"/>
</dbReference>
<dbReference type="eggNOG" id="KOG3561">
    <property type="taxonomic scope" value="Eukaryota"/>
</dbReference>
<dbReference type="InParanoid" id="Q9WUI9"/>
<dbReference type="OrthoDB" id="10035882at2759"/>
<dbReference type="PhylomeDB" id="Q9WUI9"/>
<dbReference type="Reactome" id="R-RNO-159418">
    <property type="pathway name" value="Recycling of bile acids and salts"/>
</dbReference>
<dbReference type="Reactome" id="R-RNO-192105">
    <property type="pathway name" value="Synthesis of bile acids and bile salts"/>
</dbReference>
<dbReference type="Reactome" id="R-RNO-193368">
    <property type="pathway name" value="Synthesis of bile acids and bile salts via 7alpha-hydroxycholesterol"/>
</dbReference>
<dbReference type="Reactome" id="R-RNO-193807">
    <property type="pathway name" value="Synthesis of bile acids and bile salts via 27-hydroxycholesterol"/>
</dbReference>
<dbReference type="Reactome" id="R-RNO-211976">
    <property type="pathway name" value="Endogenous sterols"/>
</dbReference>
<dbReference type="Reactome" id="R-RNO-3214847">
    <property type="pathway name" value="HATs acetylate histones"/>
</dbReference>
<dbReference type="Reactome" id="R-RNO-400206">
    <property type="pathway name" value="Regulation of lipid metabolism by PPARalpha"/>
</dbReference>
<dbReference type="Reactome" id="R-RNO-5625886">
    <property type="pathway name" value="Activated PKN1 stimulates transcription of AR (androgen receptor) regulated genes KLK2 and KLK3"/>
</dbReference>
<dbReference type="Reactome" id="R-RNO-9707564">
    <property type="pathway name" value="Cytoprotection by HMOX1"/>
</dbReference>
<dbReference type="Reactome" id="R-RNO-9841922">
    <property type="pathway name" value="MLL4 and MLL3 complexes regulate expression of PPARG target genes in adipogenesis and hepatic steatosis"/>
</dbReference>
<dbReference type="EvolutionaryTrace" id="Q9WUI9"/>
<dbReference type="PRO" id="PR:Q9WUI9"/>
<dbReference type="Proteomes" id="UP000002494">
    <property type="component" value="Unplaced"/>
</dbReference>
<dbReference type="GO" id="GO:0005737">
    <property type="term" value="C:cytoplasm"/>
    <property type="evidence" value="ECO:0000266"/>
    <property type="project" value="RGD"/>
</dbReference>
<dbReference type="GO" id="GO:0043197">
    <property type="term" value="C:dendritic spine"/>
    <property type="evidence" value="ECO:0000314"/>
    <property type="project" value="RGD"/>
</dbReference>
<dbReference type="GO" id="GO:0005634">
    <property type="term" value="C:nucleus"/>
    <property type="evidence" value="ECO:0000266"/>
    <property type="project" value="RGD"/>
</dbReference>
<dbReference type="GO" id="GO:0032991">
    <property type="term" value="C:protein-containing complex"/>
    <property type="evidence" value="ECO:0000266"/>
    <property type="project" value="RGD"/>
</dbReference>
<dbReference type="GO" id="GO:0090575">
    <property type="term" value="C:RNA polymerase II transcription regulator complex"/>
    <property type="evidence" value="ECO:0000266"/>
    <property type="project" value="RGD"/>
</dbReference>
<dbReference type="GO" id="GO:0005667">
    <property type="term" value="C:transcription regulator complex"/>
    <property type="evidence" value="ECO:0000266"/>
    <property type="project" value="RGD"/>
</dbReference>
<dbReference type="GO" id="GO:0017162">
    <property type="term" value="F:aryl hydrocarbon receptor binding"/>
    <property type="evidence" value="ECO:0000266"/>
    <property type="project" value="RGD"/>
</dbReference>
<dbReference type="GO" id="GO:0003682">
    <property type="term" value="F:chromatin binding"/>
    <property type="evidence" value="ECO:0000266"/>
    <property type="project" value="RGD"/>
</dbReference>
<dbReference type="GO" id="GO:0070182">
    <property type="term" value="F:DNA polymerase binding"/>
    <property type="evidence" value="ECO:0000353"/>
    <property type="project" value="RGD"/>
</dbReference>
<dbReference type="GO" id="GO:0030331">
    <property type="term" value="F:nuclear estrogen receptor binding"/>
    <property type="evidence" value="ECO:0000353"/>
    <property type="project" value="RGD"/>
</dbReference>
<dbReference type="GO" id="GO:0035259">
    <property type="term" value="F:nuclear glucocorticoid receptor binding"/>
    <property type="evidence" value="ECO:0000353"/>
    <property type="project" value="RGD"/>
</dbReference>
<dbReference type="GO" id="GO:0016922">
    <property type="term" value="F:nuclear receptor binding"/>
    <property type="evidence" value="ECO:0000353"/>
    <property type="project" value="RGD"/>
</dbReference>
<dbReference type="GO" id="GO:0042974">
    <property type="term" value="F:nuclear retinoic acid receptor binding"/>
    <property type="evidence" value="ECO:0000353"/>
    <property type="project" value="RGD"/>
</dbReference>
<dbReference type="GO" id="GO:0046965">
    <property type="term" value="F:nuclear retinoid X receptor binding"/>
    <property type="evidence" value="ECO:0000353"/>
    <property type="project" value="RGD"/>
</dbReference>
<dbReference type="GO" id="GO:0046966">
    <property type="term" value="F:nuclear thyroid hormone receptor binding"/>
    <property type="evidence" value="ECO:0000353"/>
    <property type="project" value="RGD"/>
</dbReference>
<dbReference type="GO" id="GO:0046983">
    <property type="term" value="F:protein dimerization activity"/>
    <property type="evidence" value="ECO:0007669"/>
    <property type="project" value="InterPro"/>
</dbReference>
<dbReference type="GO" id="GO:0019904">
    <property type="term" value="F:protein domain specific binding"/>
    <property type="evidence" value="ECO:0000266"/>
    <property type="project" value="RGD"/>
</dbReference>
<dbReference type="GO" id="GO:0044877">
    <property type="term" value="F:protein-containing complex binding"/>
    <property type="evidence" value="ECO:0000353"/>
    <property type="project" value="RGD"/>
</dbReference>
<dbReference type="GO" id="GO:0000978">
    <property type="term" value="F:RNA polymerase II cis-regulatory region sequence-specific DNA binding"/>
    <property type="evidence" value="ECO:0000266"/>
    <property type="project" value="RGD"/>
</dbReference>
<dbReference type="GO" id="GO:0001162">
    <property type="term" value="F:RNA polymerase II intronic transcription regulatory region sequence-specific DNA binding"/>
    <property type="evidence" value="ECO:0000266"/>
    <property type="project" value="RGD"/>
</dbReference>
<dbReference type="GO" id="GO:0061629">
    <property type="term" value="F:RNA polymerase II-specific DNA-binding transcription factor binding"/>
    <property type="evidence" value="ECO:0000266"/>
    <property type="project" value="RGD"/>
</dbReference>
<dbReference type="GO" id="GO:0005102">
    <property type="term" value="F:signaling receptor binding"/>
    <property type="evidence" value="ECO:0000266"/>
    <property type="project" value="RGD"/>
</dbReference>
<dbReference type="GO" id="GO:0003713">
    <property type="term" value="F:transcription coactivator activity"/>
    <property type="evidence" value="ECO:0000250"/>
    <property type="project" value="UniProtKB"/>
</dbReference>
<dbReference type="GO" id="GO:0140416">
    <property type="term" value="F:transcription regulator inhibitor activity"/>
    <property type="evidence" value="ECO:0000266"/>
    <property type="project" value="RGD"/>
</dbReference>
<dbReference type="GO" id="GO:0032870">
    <property type="term" value="P:cellular response to hormone stimulus"/>
    <property type="evidence" value="ECO:0000318"/>
    <property type="project" value="GO_Central"/>
</dbReference>
<dbReference type="GO" id="GO:1904017">
    <property type="term" value="P:cellular response to Thyroglobulin triiodothyronine"/>
    <property type="evidence" value="ECO:0000266"/>
    <property type="project" value="RGD"/>
</dbReference>
<dbReference type="GO" id="GO:0021549">
    <property type="term" value="P:cerebellum development"/>
    <property type="evidence" value="ECO:0000270"/>
    <property type="project" value="RGD"/>
</dbReference>
<dbReference type="GO" id="GO:0032922">
    <property type="term" value="P:circadian regulation of gene expression"/>
    <property type="evidence" value="ECO:0000250"/>
    <property type="project" value="UniProtKB"/>
</dbReference>
<dbReference type="GO" id="GO:0007623">
    <property type="term" value="P:circadian rhythm"/>
    <property type="evidence" value="ECO:0000266"/>
    <property type="project" value="RGD"/>
</dbReference>
<dbReference type="GO" id="GO:0045475">
    <property type="term" value="P:locomotor rhythm"/>
    <property type="evidence" value="ECO:0000266"/>
    <property type="project" value="RGD"/>
</dbReference>
<dbReference type="GO" id="GO:0008584">
    <property type="term" value="P:male gonad development"/>
    <property type="evidence" value="ECO:0000270"/>
    <property type="project" value="RGD"/>
</dbReference>
<dbReference type="GO" id="GO:0045892">
    <property type="term" value="P:negative regulation of DNA-templated transcription"/>
    <property type="evidence" value="ECO:0000266"/>
    <property type="project" value="RGD"/>
</dbReference>
<dbReference type="GO" id="GO:0045879">
    <property type="term" value="P:negative regulation of smoothened signaling pathway"/>
    <property type="evidence" value="ECO:0000266"/>
    <property type="project" value="RGD"/>
</dbReference>
<dbReference type="GO" id="GO:0000122">
    <property type="term" value="P:negative regulation of transcription by RNA polymerase II"/>
    <property type="evidence" value="ECO:0000266"/>
    <property type="project" value="RGD"/>
</dbReference>
<dbReference type="GO" id="GO:0045925">
    <property type="term" value="P:positive regulation of female receptivity"/>
    <property type="evidence" value="ECO:0000315"/>
    <property type="project" value="RGD"/>
</dbReference>
<dbReference type="GO" id="GO:2000324">
    <property type="term" value="P:positive regulation of nuclear receptor-mediated glucocorticoid signaling pathway"/>
    <property type="evidence" value="ECO:0000315"/>
    <property type="project" value="RGD"/>
</dbReference>
<dbReference type="GO" id="GO:0045944">
    <property type="term" value="P:positive regulation of transcription by RNA polymerase II"/>
    <property type="evidence" value="ECO:0000315"/>
    <property type="project" value="RGD"/>
</dbReference>
<dbReference type="GO" id="GO:0006355">
    <property type="term" value="P:regulation of DNA-templated transcription"/>
    <property type="evidence" value="ECO:0000266"/>
    <property type="project" value="RGD"/>
</dbReference>
<dbReference type="GO" id="GO:0010468">
    <property type="term" value="P:regulation of gene expression"/>
    <property type="evidence" value="ECO:0000266"/>
    <property type="project" value="RGD"/>
</dbReference>
<dbReference type="GO" id="GO:0010906">
    <property type="term" value="P:regulation of glucose metabolic process"/>
    <property type="evidence" value="ECO:0000266"/>
    <property type="project" value="RGD"/>
</dbReference>
<dbReference type="GO" id="GO:0019216">
    <property type="term" value="P:regulation of lipid metabolic process"/>
    <property type="evidence" value="ECO:0000250"/>
    <property type="project" value="UniProtKB"/>
</dbReference>
<dbReference type="GO" id="GO:0032355">
    <property type="term" value="P:response to estradiol"/>
    <property type="evidence" value="ECO:0000270"/>
    <property type="project" value="RGD"/>
</dbReference>
<dbReference type="GO" id="GO:0032570">
    <property type="term" value="P:response to progesterone"/>
    <property type="evidence" value="ECO:0000266"/>
    <property type="project" value="RGD"/>
</dbReference>
<dbReference type="CDD" id="cd18950">
    <property type="entry name" value="bHLH-PAS_NCoA2_SRC2"/>
    <property type="match status" value="1"/>
</dbReference>
<dbReference type="CDD" id="cd00130">
    <property type="entry name" value="PAS"/>
    <property type="match status" value="1"/>
</dbReference>
<dbReference type="FunFam" id="3.30.450.20:FF:000007">
    <property type="entry name" value="Nuclear receptor coactivator"/>
    <property type="match status" value="1"/>
</dbReference>
<dbReference type="FunFam" id="3.30.450.20:FF:000008">
    <property type="entry name" value="Nuclear receptor coactivator"/>
    <property type="match status" value="1"/>
</dbReference>
<dbReference type="FunFam" id="4.10.280.10:FF:000008">
    <property type="entry name" value="Nuclear receptor coactivator"/>
    <property type="match status" value="1"/>
</dbReference>
<dbReference type="Gene3D" id="4.10.280.10">
    <property type="entry name" value="Helix-loop-helix DNA-binding domain"/>
    <property type="match status" value="1"/>
</dbReference>
<dbReference type="Gene3D" id="6.10.140.20">
    <property type="entry name" value="Nuclear receptor coactivator, Ncoa-type, interlocking domain"/>
    <property type="match status" value="1"/>
</dbReference>
<dbReference type="Gene3D" id="3.30.450.20">
    <property type="entry name" value="PAS domain"/>
    <property type="match status" value="2"/>
</dbReference>
<dbReference type="IDEAL" id="IID50249"/>
<dbReference type="InterPro" id="IPR011598">
    <property type="entry name" value="bHLH_dom"/>
</dbReference>
<dbReference type="InterPro" id="IPR056193">
    <property type="entry name" value="bHLH_NCOA1-3"/>
</dbReference>
<dbReference type="InterPro" id="IPR036638">
    <property type="entry name" value="HLH_DNA-bd_sf"/>
</dbReference>
<dbReference type="InterPro" id="IPR010011">
    <property type="entry name" value="NCO_DUF1518"/>
</dbReference>
<dbReference type="InterPro" id="IPR032565">
    <property type="entry name" value="NCOA2/3_DUF4927"/>
</dbReference>
<dbReference type="InterPro" id="IPR028822">
    <property type="entry name" value="NCOA2_bHLH"/>
</dbReference>
<dbReference type="InterPro" id="IPR009110">
    <property type="entry name" value="Nuc_rcpt_coact"/>
</dbReference>
<dbReference type="InterPro" id="IPR014920">
    <property type="entry name" value="Nuc_rcpt_coact_Ncoa-typ"/>
</dbReference>
<dbReference type="InterPro" id="IPR037077">
    <property type="entry name" value="Nuc_rcpt_coact_Ncoa_int_sf"/>
</dbReference>
<dbReference type="InterPro" id="IPR017426">
    <property type="entry name" value="Nuclear_rcpt_coactivator"/>
</dbReference>
<dbReference type="InterPro" id="IPR000014">
    <property type="entry name" value="PAS"/>
</dbReference>
<dbReference type="InterPro" id="IPR035965">
    <property type="entry name" value="PAS-like_dom_sf"/>
</dbReference>
<dbReference type="InterPro" id="IPR013767">
    <property type="entry name" value="PAS_fold"/>
</dbReference>
<dbReference type="InterPro" id="IPR014935">
    <property type="entry name" value="SRC/p160_LXXLL"/>
</dbReference>
<dbReference type="PANTHER" id="PTHR10684">
    <property type="entry name" value="NUCLEAR RECEPTOR COACTIVATOR"/>
    <property type="match status" value="1"/>
</dbReference>
<dbReference type="PANTHER" id="PTHR10684:SF2">
    <property type="entry name" value="NUCLEAR RECEPTOR COACTIVATOR 2"/>
    <property type="match status" value="1"/>
</dbReference>
<dbReference type="Pfam" id="PF23172">
    <property type="entry name" value="bHLH_NCOA"/>
    <property type="match status" value="1"/>
</dbReference>
<dbReference type="Pfam" id="PF07469">
    <property type="entry name" value="DUF1518"/>
    <property type="match status" value="1"/>
</dbReference>
<dbReference type="Pfam" id="PF16279">
    <property type="entry name" value="DUF4927"/>
    <property type="match status" value="1"/>
</dbReference>
<dbReference type="Pfam" id="PF16665">
    <property type="entry name" value="NCOA_u2"/>
    <property type="match status" value="1"/>
</dbReference>
<dbReference type="Pfam" id="PF08815">
    <property type="entry name" value="Nuc_rec_co-act"/>
    <property type="match status" value="1"/>
</dbReference>
<dbReference type="Pfam" id="PF00989">
    <property type="entry name" value="PAS"/>
    <property type="match status" value="1"/>
</dbReference>
<dbReference type="Pfam" id="PF14598">
    <property type="entry name" value="PAS_11"/>
    <property type="match status" value="1"/>
</dbReference>
<dbReference type="Pfam" id="PF08832">
    <property type="entry name" value="SRC-1"/>
    <property type="match status" value="1"/>
</dbReference>
<dbReference type="PIRSF" id="PIRSF038181">
    <property type="entry name" value="Nuclear_receptor_coactivator"/>
    <property type="match status" value="1"/>
</dbReference>
<dbReference type="SMART" id="SM01151">
    <property type="entry name" value="DUF1518"/>
    <property type="match status" value="1"/>
</dbReference>
<dbReference type="SMART" id="SM00353">
    <property type="entry name" value="HLH"/>
    <property type="match status" value="1"/>
</dbReference>
<dbReference type="SMART" id="SM00091">
    <property type="entry name" value="PAS"/>
    <property type="match status" value="1"/>
</dbReference>
<dbReference type="SUPFAM" id="SSF47459">
    <property type="entry name" value="HLH, helix-loop-helix DNA-binding domain"/>
    <property type="match status" value="1"/>
</dbReference>
<dbReference type="SUPFAM" id="SSF69125">
    <property type="entry name" value="Nuclear receptor coactivator interlocking domain"/>
    <property type="match status" value="1"/>
</dbReference>
<dbReference type="SUPFAM" id="SSF55785">
    <property type="entry name" value="PYP-like sensor domain (PAS domain)"/>
    <property type="match status" value="2"/>
</dbReference>
<dbReference type="PROSITE" id="PS50888">
    <property type="entry name" value="BHLH"/>
    <property type="match status" value="1"/>
</dbReference>
<dbReference type="PROSITE" id="PS50112">
    <property type="entry name" value="PAS"/>
    <property type="match status" value="1"/>
</dbReference>
<reference key="1">
    <citation type="journal article" date="1998" name="Mol. Cell. Biol.">
        <title>Mechanistic principles in NR box-dependent interaction between nuclear hormone receptors and the coactivator TIF2.</title>
        <authorList>
            <person name="Leers J."/>
            <person name="Treuter E."/>
            <person name="Gustafsson J.-A."/>
        </authorList>
    </citation>
    <scope>NUCLEOTIDE SEQUENCE [MRNA]</scope>
    <source>
        <tissue>Liver</tissue>
    </source>
</reference>
<reference key="2">
    <citation type="journal article" date="2012" name="Nat. Commun.">
        <title>Quantitative maps of protein phosphorylation sites across 14 different rat organs and tissues.</title>
        <authorList>
            <person name="Lundby A."/>
            <person name="Secher A."/>
            <person name="Lage K."/>
            <person name="Nordsborg N.B."/>
            <person name="Dmytriyev A."/>
            <person name="Lundby C."/>
            <person name="Olsen J.V."/>
        </authorList>
    </citation>
    <scope>PHOSPHORYLATION [LARGE SCALE ANALYSIS] AT SER-396; SER-493; SER-499 AND SER-699</scope>
    <scope>IDENTIFICATION BY MASS SPECTROMETRY [LARGE SCALE ANALYSIS]</scope>
</reference>
<keyword id="KW-0002">3D-structure</keyword>
<keyword id="KW-0007">Acetylation</keyword>
<keyword id="KW-0010">Activator</keyword>
<keyword id="KW-0090">Biological rhythms</keyword>
<keyword id="KW-1017">Isopeptide bond</keyword>
<keyword id="KW-0488">Methylation</keyword>
<keyword id="KW-0539">Nucleus</keyword>
<keyword id="KW-0597">Phosphoprotein</keyword>
<keyword id="KW-1185">Reference proteome</keyword>
<keyword id="KW-0677">Repeat</keyword>
<keyword id="KW-0804">Transcription</keyword>
<keyword id="KW-0805">Transcription regulation</keyword>
<keyword id="KW-0832">Ubl conjugation</keyword>
<sequence length="1465" mass="159436">MSGMGENTSDPSRAETRKRKECPDQLGPSPKRSTEKRNREQENKYIEELAELIFANFNDIDNFNFKPDKCAILKETVKQIRQIKEQEKAAAANIDEVQKSDVSSTGQGVIDKDALGPMMLEALDGFFFVVNLEGNVVFVSENVTQYLRYNQEELMNKSVYSILHVGDHTEFVKNLLPKSMVNGGSWTGEPPRRNSHTFNCRMLVKPLPDSEEEGHDNQEAHQKYETMQCFAVSQPKSIKEEGEDKQSCLICVARRVPMKERPALPSSESFTTRQDLQGKITFLDTSTMRDAMKPGWEDLVRRCIQKFHTQHEGESLSYAKRHHHEVLRQGLAFSQIYRFSLSDGTLVAAQTKSKLIRSQTTNEPQLVISIHMLHREQNVCVMNPDLTGQAMGKPLSPMSSSSPARQAMCSGNPGQDVALGSNMNFPMNGPREQMSMPMGRFGGSGGMNHVSGMQATTPQGSNYALKMNSPSQSSPGLNPGQPSSVLSPRHRMSPGVAGSPRVPPSQFSPAGSLHSPAGVCSSTGNSHSYTNSSLNALQALSEGHGVSLGPSLASPDLKMGNSQNSPVNMNPPPLSKMGSLDSKDCFGLYGEPSEGTTGQAQASCHPEEQKRPNDSSMPQAASEDRAEGHSRLHESKGQTKLLQLLTTKSDQMEPSPLPSSLSDTNKDSTGSLPGPGSTHGTSLKEKHKILHRLLQDSSSPVDLAKLTAEATGKELNQESSGTAPGSEVTVKQEPASPKKKENALLRYLLDKDDTKDIGLPEITPKLERLDSKTDPASNTKLIAMKTVKEEVSFEPSDQPGSELDNLEEILDDLQNSQLPQLFPDTRPGAPTGSVDKQAIINDLMQLTADSSPVTPVGAQKAALRMSQSTFNNPRPGQLGRLLPNQNLPLDITLQSPTGAGPFPPIRNSSPYSVIPQPGMMGNQGMLGSQGNLGNNSTGMIGSSTSRSSMPSGEWAPQSPAVRVTCAATTGAMNRPIQGGMIRNPTASIPMRANSQPGQRQMLQPQVMNIGPSELEMNMGGPQYNQQQAPPNQTAPWPESILPIDQASFGSQNRHPFGSSPDDLLCPHPAAESPSDEGALLDQLYLALRNFDGLEEIDRALGIPELVSQSQAVDPEQFSSQESSMMLEQKPPVFPQQYASQTQMAQGSYNPMQDPNFHTMGQRPNYTTLRMQPRPGLRPTGIVQNQPNQLRLQLQHRLQAQQNRQPLMNQISGVSNVNLTLRPGVPTQAPINAQMLAQRQREILNQHLRQRQMHQQQQVQQRTLMMRGQGLNMTPSMVAPTGLPAAMSNPRIPQANAQQFPFPPNYGISQQPDPGFTGATTPQSPLMSPRMAHTQSPMMQQSQANPAYQPASDINGWAQGSMGGNSMFSQQSPPHFGQQANTSMYNNNMNINVSMATNTAGLSNMNQMTGQMSMTSVTSVPTSGLSSMGPEQVNDPALRGSSLFTTNQLPGMDMIKQEGDGSRKYC</sequence>
<proteinExistence type="evidence at protein level"/>
<accession>Q9WUI9</accession>
<protein>
    <recommendedName>
        <fullName>Nuclear receptor coactivator 2</fullName>
        <shortName>NCoA-2</shortName>
    </recommendedName>
    <alternativeName>
        <fullName>Transcriptional intermediary factor 2</fullName>
    </alternativeName>
</protein>
<organism>
    <name type="scientific">Rattus norvegicus</name>
    <name type="common">Rat</name>
    <dbReference type="NCBI Taxonomy" id="10116"/>
    <lineage>
        <taxon>Eukaryota</taxon>
        <taxon>Metazoa</taxon>
        <taxon>Chordata</taxon>
        <taxon>Craniata</taxon>
        <taxon>Vertebrata</taxon>
        <taxon>Euteleostomi</taxon>
        <taxon>Mammalia</taxon>
        <taxon>Eutheria</taxon>
        <taxon>Euarchontoglires</taxon>
        <taxon>Glires</taxon>
        <taxon>Rodentia</taxon>
        <taxon>Myomorpha</taxon>
        <taxon>Muroidea</taxon>
        <taxon>Muridae</taxon>
        <taxon>Murinae</taxon>
        <taxon>Rattus</taxon>
    </lineage>
</organism>
<comment type="function">
    <text evidence="1 2">Transcriptional coactivator for steroid receptors and nuclear receptors. Coactivator of the steroid binding domain (AF-2) but not of the modulating N-terminal domain (AF-1). Required with NCOA1 to control energy balance between white and brown adipose tissues. Critical regulator of glucose metabolism regulation, acts as a RORA coactivator to specifically modulate G6PC1 expression. Involved in the positive regulation of the transcriptional activity of the glucocorticoid receptor NR3C1 by sumoylation enhancer RWDD3. Positively regulates the circadian clock by acting as a transcriptional coactivator for the CLOCK-BMAL1 heterodimer.</text>
</comment>
<comment type="subunit">
    <text evidence="1 2">Present in a complex containing NCOA3, IKKA, IKKB, IKBKG and CREBBP (By similarity). Present in a complex containing CARM1 and EP300/P300 (By similarity). Interacts (via C-terminus) with CREBBP (By similarity). Interacts (via LXXLL 1, 2 and 3 motifs) with RORA (via AF-2 motif) (By similarity). Interacts (via LXXLL 1, 2 and 3 motifs) with RORC (via AF-2 motif) (By similarity). Interacts with APEX1 (By similarity). Interacts with BMAL1 (By similarity). Interacts with CARM1 (By similarity). Interacts with CASP8AP2 (By similarity). Interacts with CLOCK (By similarity). Interacts with DDX5 (By similarity). Interacts with ESR1 (By similarity). Interacts with HIF1A (By similarity). Interacts with NCOA1 (By similarity). Interacts with NR4A1/Nur77 (By similarity). Interacts with NR4A3; potentiates the activity of the NR4A3 (By similarity). Interacts with NR1H3 (By similarity). Interacts with NR3C1 (By similarity). Interacts with NR3C2 (By similarity). Interacts with PSMB9 (By similarity). Interacts with RARA (By similarity). Interacts with RXRA (By similarity). Interacts with RWDD3 (By similarity). Interacts with TTLL5/STAMP (By similarity). Interacts with NR5A2 (By similarity).</text>
</comment>
<comment type="subcellular location">
    <subcellularLocation>
        <location evidence="1">Nucleus</location>
    </subcellularLocation>
</comment>
<comment type="domain">
    <text evidence="1">Contains four Leu-Xaa-Xaa-Leu-Leu (LXXLL) motifs. The LXXLL motifs are essential for the association with nuclear receptors and are, at least in part, functionally redundant.</text>
</comment>
<comment type="domain">
    <text evidence="1">The LLXXLXXXL motif is involved in transcriptional coactivation and CREBBP/CBP binding.</text>
</comment>
<comment type="domain">
    <text evidence="1">Contains 2 C-terminal transcription activation domains (AD1 and AD2) that can function independently.</text>
</comment>
<comment type="PTM">
    <text evidence="2">Acetylated. Deacetylation at Lys-780 by SIRT6 stimulates its ability to coactivate PPARA.</text>
</comment>
<comment type="similarity">
    <text evidence="6">Belongs to the SRC/p160 nuclear receptor coactivator family.</text>
</comment>
<gene>
    <name type="primary">Ncoa2</name>
    <name type="synonym">Tif2</name>
</gene>
<evidence type="ECO:0000250" key="1">
    <source>
        <dbReference type="UniProtKB" id="Q15596"/>
    </source>
</evidence>
<evidence type="ECO:0000250" key="2">
    <source>
        <dbReference type="UniProtKB" id="Q61026"/>
    </source>
</evidence>
<evidence type="ECO:0000255" key="3">
    <source>
        <dbReference type="PROSITE-ProRule" id="PRU00140"/>
    </source>
</evidence>
<evidence type="ECO:0000255" key="4">
    <source>
        <dbReference type="PROSITE-ProRule" id="PRU00981"/>
    </source>
</evidence>
<evidence type="ECO:0000256" key="5">
    <source>
        <dbReference type="SAM" id="MobiDB-lite"/>
    </source>
</evidence>
<evidence type="ECO:0000305" key="6"/>
<evidence type="ECO:0007744" key="7">
    <source>
    </source>
</evidence>
<evidence type="ECO:0007829" key="8">
    <source>
        <dbReference type="PDB" id="1XLS"/>
    </source>
</evidence>
<evidence type="ECO:0007829" key="9">
    <source>
        <dbReference type="PDB" id="3L03"/>
    </source>
</evidence>
<feature type="initiator methionine" description="Removed" evidence="1">
    <location>
        <position position="1"/>
    </location>
</feature>
<feature type="chain" id="PRO_0000094404" description="Nuclear receptor coactivator 2">
    <location>
        <begin position="2"/>
        <end position="1465"/>
    </location>
</feature>
<feature type="domain" description="bHLH" evidence="4">
    <location>
        <begin position="26"/>
        <end position="83"/>
    </location>
</feature>
<feature type="domain" description="PAS" evidence="3">
    <location>
        <begin position="119"/>
        <end position="183"/>
    </location>
</feature>
<feature type="region of interest" description="Disordered" evidence="5">
    <location>
        <begin position="1"/>
        <end position="40"/>
    </location>
</feature>
<feature type="region of interest" description="Disordered" evidence="5">
    <location>
        <begin position="449"/>
        <end position="528"/>
    </location>
</feature>
<feature type="region of interest" description="Disordered" evidence="5">
    <location>
        <begin position="547"/>
        <end position="741"/>
    </location>
</feature>
<feature type="region of interest" description="CASP8AP2-binding" evidence="2">
    <location>
        <begin position="691"/>
        <end position="743"/>
    </location>
</feature>
<feature type="region of interest" description="Interaction with BMAL1" evidence="2">
    <location>
        <begin position="730"/>
        <end position="1121"/>
    </location>
</feature>
<feature type="region of interest" description="Disordered" evidence="5">
    <location>
        <begin position="1052"/>
        <end position="1075"/>
    </location>
</feature>
<feature type="region of interest" description="Disordered" evidence="5">
    <location>
        <begin position="1311"/>
        <end position="1330"/>
    </location>
</feature>
<feature type="short sequence motif" description="LXXLL motif 1">
    <location>
        <begin position="641"/>
        <end position="645"/>
    </location>
</feature>
<feature type="short sequence motif" description="LXXLL motif 2">
    <location>
        <begin position="690"/>
        <end position="694"/>
    </location>
</feature>
<feature type="short sequence motif" description="LXXLL motif 3">
    <location>
        <begin position="745"/>
        <end position="749"/>
    </location>
</feature>
<feature type="short sequence motif" description="LXXLL motif 4">
    <location>
        <begin position="878"/>
        <end position="882"/>
    </location>
</feature>
<feature type="short sequence motif" description="LLXXLXXXL motif">
    <location>
        <begin position="1079"/>
        <end position="1087"/>
    </location>
</feature>
<feature type="compositionally biased region" description="Polar residues" evidence="5">
    <location>
        <begin position="1"/>
        <end position="11"/>
    </location>
</feature>
<feature type="compositionally biased region" description="Polar residues" evidence="5">
    <location>
        <begin position="451"/>
        <end position="486"/>
    </location>
</feature>
<feature type="compositionally biased region" description="Basic and acidic residues" evidence="5">
    <location>
        <begin position="622"/>
        <end position="637"/>
    </location>
</feature>
<feature type="compositionally biased region" description="Low complexity" evidence="5">
    <location>
        <begin position="638"/>
        <end position="648"/>
    </location>
</feature>
<feature type="compositionally biased region" description="Polar residues" evidence="5">
    <location>
        <begin position="658"/>
        <end position="671"/>
    </location>
</feature>
<feature type="compositionally biased region" description="Polar residues" evidence="5">
    <location>
        <begin position="1311"/>
        <end position="1325"/>
    </location>
</feature>
<feature type="modified residue" description="N-acetylserine" evidence="1">
    <location>
        <position position="2"/>
    </location>
</feature>
<feature type="modified residue" description="Phosphoserine" evidence="1">
    <location>
        <position position="29"/>
    </location>
</feature>
<feature type="modified residue" description="Asymmetric dimethylarginine" evidence="2">
    <location>
        <position position="338"/>
    </location>
</feature>
<feature type="modified residue" description="Phosphoserine" evidence="7">
    <location>
        <position position="396"/>
    </location>
</feature>
<feature type="modified residue" description="Phosphoserine" evidence="1">
    <location>
        <position position="487"/>
    </location>
</feature>
<feature type="modified residue" description="Phosphoserine" evidence="7">
    <location>
        <position position="493"/>
    </location>
</feature>
<feature type="modified residue" description="Phosphoserine" evidence="7">
    <location>
        <position position="499"/>
    </location>
</feature>
<feature type="modified residue" description="Phosphoserine" evidence="1">
    <location>
        <position position="554"/>
    </location>
</feature>
<feature type="modified residue" description="Phosphoserine" evidence="1">
    <location>
        <position position="565"/>
    </location>
</feature>
<feature type="modified residue" description="N6-acetyllysine" evidence="2">
    <location>
        <position position="636"/>
    </location>
</feature>
<feature type="modified residue" description="N6-acetyllysine" evidence="1">
    <location>
        <position position="640"/>
    </location>
</feature>
<feature type="modified residue" description="Phosphoserine" evidence="1">
    <location>
        <position position="682"/>
    </location>
</feature>
<feature type="modified residue" description="Phosphoserine" evidence="7">
    <location>
        <position position="699"/>
    </location>
</feature>
<feature type="modified residue" description="Phosphoserine" evidence="1">
    <location>
        <position position="736"/>
    </location>
</feature>
<feature type="modified residue" description="Phosphoserine" evidence="1">
    <location>
        <position position="771"/>
    </location>
</feature>
<feature type="modified residue" description="N6-acetyllysine" evidence="1">
    <location>
        <position position="780"/>
    </location>
</feature>
<feature type="modified residue" description="N6-acetyllysine" evidence="1">
    <location>
        <position position="785"/>
    </location>
</feature>
<feature type="modified residue" description="Asymmetric dimethylarginine" evidence="2">
    <location>
        <position position="864"/>
    </location>
</feature>
<feature type="modified residue" description="Asymmetric dimethylarginine" evidence="2">
    <location>
        <position position="874"/>
    </location>
</feature>
<feature type="modified residue" description="Asymmetric dimethylarginine" evidence="1">
    <location>
        <position position="1173"/>
    </location>
</feature>
<feature type="modified residue" description="Asymmetric dimethylarginine" evidence="1">
    <location>
        <position position="1177"/>
    </location>
</feature>
<feature type="modified residue" description="Asymmetric dimethylarginine" evidence="1">
    <location>
        <position position="1190"/>
    </location>
</feature>
<feature type="modified residue" description="Asymmetric dimethylarginine" evidence="1">
    <location>
        <position position="1196"/>
    </location>
</feature>
<feature type="modified residue" description="Asymmetric dimethylarginine" evidence="1">
    <location>
        <position position="1203"/>
    </location>
</feature>
<feature type="modified residue" description="Asymmetric dimethylarginine" evidence="1">
    <location>
        <position position="1221"/>
    </location>
</feature>
<feature type="modified residue" description="Asymmetric dimethylarginine" evidence="2">
    <location>
        <position position="1240"/>
    </location>
</feature>
<feature type="modified residue" description="Omega-N-methylarginine" evidence="1">
    <location>
        <position position="1261"/>
    </location>
</feature>
<feature type="modified residue" description="Asymmetric dimethylarginine" evidence="1">
    <location>
        <position position="1266"/>
    </location>
</feature>
<feature type="cross-link" description="Glycyl lysine isopeptide (Lys-Gly) (interchain with G-Cter in SUMO2)" evidence="1">
    <location>
        <position position="239"/>
    </location>
</feature>
<feature type="cross-link" description="Glycyl lysine isopeptide (Lys-Gly) (interchain with G-Cter in SUMO2)" evidence="1">
    <location>
        <position position="648"/>
    </location>
</feature>
<feature type="cross-link" description="Glycyl lysine isopeptide (Lys-Gly) (interchain with G-Cter in SUMO2)" evidence="1">
    <location>
        <position position="705"/>
    </location>
</feature>
<feature type="cross-link" description="Glycyl lysine isopeptide (Lys-Gly) (interchain with G-Cter in SUMO2)" evidence="1">
    <location>
        <position position="731"/>
    </location>
</feature>
<feature type="cross-link" description="Glycyl lysine isopeptide (Lys-Gly) (interchain with G-Cter in SUMO2); alternate" evidence="1">
    <location>
        <position position="785"/>
    </location>
</feature>
<feature type="cross-link" description="Glycyl lysine isopeptide (Lys-Gly) (interchain with G-Cter in SUMO2)" evidence="1">
    <location>
        <position position="1455"/>
    </location>
</feature>
<feature type="helix" evidence="9">
    <location>
        <begin position="689"/>
        <end position="695"/>
    </location>
</feature>
<feature type="helix" evidence="8">
    <location>
        <begin position="744"/>
        <end position="748"/>
    </location>
</feature>
<name>NCOA2_RAT</name>